<protein>
    <recommendedName>
        <fullName evidence="1">5-amino-6-(D-ribitylamino)uracil--L-tyrosine 4-hydroxyphenyl transferase</fullName>
        <ecNumber evidence="1">2.5.1.147</ecNumber>
    </recommendedName>
    <alternativeName>
        <fullName evidence="1">FO synthase subunit 2</fullName>
    </alternativeName>
</protein>
<sequence>MDLISFKEKDISKKECLELFLDTENFFDILKVADDIRKESVGDTVTYVLNANINFTNVCSGTCKFCAFKTEKEDPNSFFLNPDKVAEKALLARKTGATEVCIQGGLLPEIDTYFQAEILQKVKKITEKYGGIDIHAFSPMEVKSAAENCGLNVKEALKILKDSGLKTMPGTAAEILNDEIRNEICPTKLTTSEWIDVVKTAHKNGIKTTCTMMYGHIEENVHLVEHLSILKEIQKETSGFTEFVPLTFLHENAPLHHIGKVKSGASGILDLKVYAISRIFFKNYLKNIQTSWVKLGIKLSQISLNCGANDVGGTLMEESISKAAGGSFGTCMSEEKLKNMILNVNKIPKKRNTLYELIN</sequence>
<organism>
    <name type="scientific">Methanococcus vannielii (strain ATCC 35089 / DSM 1224 / JCM 13029 / OCM 148 / SB)</name>
    <dbReference type="NCBI Taxonomy" id="406327"/>
    <lineage>
        <taxon>Archaea</taxon>
        <taxon>Methanobacteriati</taxon>
        <taxon>Methanobacteriota</taxon>
        <taxon>Methanomada group</taxon>
        <taxon>Methanococci</taxon>
        <taxon>Methanococcales</taxon>
        <taxon>Methanococcaceae</taxon>
        <taxon>Methanococcus</taxon>
    </lineage>
</organism>
<keyword id="KW-0004">4Fe-4S</keyword>
<keyword id="KW-0408">Iron</keyword>
<keyword id="KW-0411">Iron-sulfur</keyword>
<keyword id="KW-0479">Metal-binding</keyword>
<keyword id="KW-0949">S-adenosyl-L-methionine</keyword>
<keyword id="KW-0808">Transferase</keyword>
<gene>
    <name evidence="1" type="primary">cofH</name>
    <name type="ordered locus">Mevan_1071</name>
</gene>
<dbReference type="EC" id="2.5.1.147" evidence="1"/>
<dbReference type="EMBL" id="CP000742">
    <property type="protein sequence ID" value="ABR54971.1"/>
    <property type="molecule type" value="Genomic_DNA"/>
</dbReference>
<dbReference type="RefSeq" id="WP_012065886.1">
    <property type="nucleotide sequence ID" value="NC_009634.1"/>
</dbReference>
<dbReference type="SMR" id="A6UR49"/>
<dbReference type="STRING" id="406327.Mevan_1071"/>
<dbReference type="GeneID" id="5325358"/>
<dbReference type="KEGG" id="mvn:Mevan_1071"/>
<dbReference type="eggNOG" id="arCOG00656">
    <property type="taxonomic scope" value="Archaea"/>
</dbReference>
<dbReference type="HOGENOM" id="CLU_040406_1_0_2"/>
<dbReference type="OrthoDB" id="8186at2157"/>
<dbReference type="UniPathway" id="UPA00072"/>
<dbReference type="Proteomes" id="UP000001107">
    <property type="component" value="Chromosome"/>
</dbReference>
<dbReference type="GO" id="GO:0051539">
    <property type="term" value="F:4 iron, 4 sulfur cluster binding"/>
    <property type="evidence" value="ECO:0007669"/>
    <property type="project" value="UniProtKB-KW"/>
</dbReference>
<dbReference type="GO" id="GO:0141093">
    <property type="term" value="F:5-amino-6-(D-ribitylamino)uracil--L-tyrosine 4-hydroxyphenyl transferase activity"/>
    <property type="evidence" value="ECO:0007669"/>
    <property type="project" value="UniProtKB-EC"/>
</dbReference>
<dbReference type="GO" id="GO:0044689">
    <property type="term" value="F:7,8-didemethyl-8-hydroxy-5-deazariboflavin synthase activity"/>
    <property type="evidence" value="ECO:0007669"/>
    <property type="project" value="TreeGrafter"/>
</dbReference>
<dbReference type="GO" id="GO:0005506">
    <property type="term" value="F:iron ion binding"/>
    <property type="evidence" value="ECO:0007669"/>
    <property type="project" value="UniProtKB-UniRule"/>
</dbReference>
<dbReference type="CDD" id="cd01335">
    <property type="entry name" value="Radical_SAM"/>
    <property type="match status" value="1"/>
</dbReference>
<dbReference type="FunFam" id="3.20.20.70:FF:000134">
    <property type="entry name" value="7,8-didemethyl-8-hydroxy-5-deazariboflavin synthase"/>
    <property type="match status" value="1"/>
</dbReference>
<dbReference type="Gene3D" id="3.20.20.70">
    <property type="entry name" value="Aldolase class I"/>
    <property type="match status" value="1"/>
</dbReference>
<dbReference type="HAMAP" id="MF_01612">
    <property type="entry name" value="FO_synth_sub2"/>
    <property type="match status" value="1"/>
</dbReference>
<dbReference type="InterPro" id="IPR013785">
    <property type="entry name" value="Aldolase_TIM"/>
</dbReference>
<dbReference type="InterPro" id="IPR045567">
    <property type="entry name" value="CofH/MnqC-like_C"/>
</dbReference>
<dbReference type="InterPro" id="IPR019940">
    <property type="entry name" value="CofH_family"/>
</dbReference>
<dbReference type="InterPro" id="IPR006638">
    <property type="entry name" value="Elp3/MiaA/NifB-like_rSAM"/>
</dbReference>
<dbReference type="InterPro" id="IPR034405">
    <property type="entry name" value="F420"/>
</dbReference>
<dbReference type="InterPro" id="IPR020050">
    <property type="entry name" value="FO_synthase_su2"/>
</dbReference>
<dbReference type="InterPro" id="IPR007197">
    <property type="entry name" value="rSAM"/>
</dbReference>
<dbReference type="NCBIfam" id="TIGR00423">
    <property type="entry name" value="CofH family radical SAM protein"/>
    <property type="match status" value="1"/>
</dbReference>
<dbReference type="NCBIfam" id="TIGR03551">
    <property type="entry name" value="F420_cofH"/>
    <property type="match status" value="1"/>
</dbReference>
<dbReference type="NCBIfam" id="NF005609">
    <property type="entry name" value="PRK07360.1"/>
    <property type="match status" value="1"/>
</dbReference>
<dbReference type="PANTHER" id="PTHR43076">
    <property type="entry name" value="FO SYNTHASE (COFH)"/>
    <property type="match status" value="1"/>
</dbReference>
<dbReference type="PANTHER" id="PTHR43076:SF1">
    <property type="entry name" value="LIPOYL SYNTHASE 2"/>
    <property type="match status" value="1"/>
</dbReference>
<dbReference type="Pfam" id="PF19288">
    <property type="entry name" value="CofH_C"/>
    <property type="match status" value="1"/>
</dbReference>
<dbReference type="Pfam" id="PF04055">
    <property type="entry name" value="Radical_SAM"/>
    <property type="match status" value="1"/>
</dbReference>
<dbReference type="PIRSF" id="PIRSF004762">
    <property type="entry name" value="CHP00423"/>
    <property type="match status" value="1"/>
</dbReference>
<dbReference type="SFLD" id="SFLDF00293">
    <property type="entry name" value="((2_3_4_5-tetrahydroxypentyl)a"/>
    <property type="match status" value="1"/>
</dbReference>
<dbReference type="SFLD" id="SFLDG01064">
    <property type="entry name" value="F420__menaquinone_cofactor_bio"/>
    <property type="match status" value="1"/>
</dbReference>
<dbReference type="SFLD" id="SFLDG01389">
    <property type="entry name" value="menaquinone_synthsis_involved"/>
    <property type="match status" value="1"/>
</dbReference>
<dbReference type="SMART" id="SM00729">
    <property type="entry name" value="Elp3"/>
    <property type="match status" value="1"/>
</dbReference>
<dbReference type="SUPFAM" id="SSF102114">
    <property type="entry name" value="Radical SAM enzymes"/>
    <property type="match status" value="1"/>
</dbReference>
<dbReference type="PROSITE" id="PS51918">
    <property type="entry name" value="RADICAL_SAM"/>
    <property type="match status" value="1"/>
</dbReference>
<proteinExistence type="inferred from homology"/>
<accession>A6UR49</accession>
<reference key="1">
    <citation type="submission" date="2007-06" db="EMBL/GenBank/DDBJ databases">
        <title>Complete sequence of Methanococcus vannielii SB.</title>
        <authorList>
            <consortium name="US DOE Joint Genome Institute"/>
            <person name="Copeland A."/>
            <person name="Lucas S."/>
            <person name="Lapidus A."/>
            <person name="Barry K."/>
            <person name="Glavina del Rio T."/>
            <person name="Dalin E."/>
            <person name="Tice H."/>
            <person name="Pitluck S."/>
            <person name="Chain P."/>
            <person name="Malfatti S."/>
            <person name="Shin M."/>
            <person name="Vergez L."/>
            <person name="Schmutz J."/>
            <person name="Larimer F."/>
            <person name="Land M."/>
            <person name="Hauser L."/>
            <person name="Kyrpides N."/>
            <person name="Anderson I."/>
            <person name="Sieprawska-Lupa M."/>
            <person name="Whitman W.B."/>
            <person name="Richardson P."/>
        </authorList>
    </citation>
    <scope>NUCLEOTIDE SEQUENCE [LARGE SCALE GENOMIC DNA]</scope>
    <source>
        <strain>ATCC 35089 / DSM 1224 / JCM 13029 / OCM 148 / SB</strain>
    </source>
</reference>
<comment type="function">
    <text evidence="1">Catalyzes the radical-mediated synthesis of 5-amino-5-(4-hydroxybenzyl)-6-(D-ribitylimino)-5,6-dihydrouracil from 5-amino-6-(D-ribitylamino)uracil and L-tyrosine.</text>
</comment>
<comment type="catalytic activity">
    <reaction evidence="1">
        <text>5-amino-6-(D-ribitylamino)uracil + L-tyrosine + S-adenosyl-L-methionine = 5-amino-5-(4-hydroxybenzyl)-6-(D-ribitylimino)-5,6-dihydrouracil + 2-iminoacetate + 5'-deoxyadenosine + L-methionine + H(+)</text>
        <dbReference type="Rhea" id="RHEA:55200"/>
        <dbReference type="ChEBI" id="CHEBI:15378"/>
        <dbReference type="ChEBI" id="CHEBI:15934"/>
        <dbReference type="ChEBI" id="CHEBI:17319"/>
        <dbReference type="ChEBI" id="CHEBI:57844"/>
        <dbReference type="ChEBI" id="CHEBI:58315"/>
        <dbReference type="ChEBI" id="CHEBI:59789"/>
        <dbReference type="ChEBI" id="CHEBI:77846"/>
        <dbReference type="ChEBI" id="CHEBI:85936"/>
        <dbReference type="EC" id="2.5.1.147"/>
    </reaction>
</comment>
<comment type="cofactor">
    <cofactor evidence="1">
        <name>[4Fe-4S] cluster</name>
        <dbReference type="ChEBI" id="CHEBI:49883"/>
    </cofactor>
    <text evidence="1">Binds 1 [4Fe-4S] cluster. The cluster is coordinated with 3 cysteines and an exchangeable S-adenosyl-L-methionine.</text>
</comment>
<comment type="pathway">
    <text evidence="1">Cofactor biosynthesis; coenzyme F0 biosynthesis.</text>
</comment>
<comment type="subunit">
    <text evidence="1">Consists of two subunits, CofG and CofH.</text>
</comment>
<comment type="similarity">
    <text evidence="1">Belongs to the radical SAM superfamily. CofH family.</text>
</comment>
<evidence type="ECO:0000255" key="1">
    <source>
        <dbReference type="HAMAP-Rule" id="MF_01612"/>
    </source>
</evidence>
<evidence type="ECO:0000255" key="2">
    <source>
        <dbReference type="PROSITE-ProRule" id="PRU01266"/>
    </source>
</evidence>
<feature type="chain" id="PRO_1000069453" description="5-amino-6-(D-ribitylamino)uracil--L-tyrosine 4-hydroxyphenyl transferase">
    <location>
        <begin position="1"/>
        <end position="359"/>
    </location>
</feature>
<feature type="domain" description="Radical SAM core" evidence="2">
    <location>
        <begin position="45"/>
        <end position="282"/>
    </location>
</feature>
<feature type="binding site" evidence="1">
    <location>
        <position position="59"/>
    </location>
    <ligand>
        <name>[4Fe-4S] cluster</name>
        <dbReference type="ChEBI" id="CHEBI:49883"/>
        <note>4Fe-4S-S-AdoMet</note>
    </ligand>
</feature>
<feature type="binding site" evidence="1">
    <location>
        <position position="63"/>
    </location>
    <ligand>
        <name>[4Fe-4S] cluster</name>
        <dbReference type="ChEBI" id="CHEBI:49883"/>
        <note>4Fe-4S-S-AdoMet</note>
    </ligand>
</feature>
<feature type="binding site" evidence="1">
    <location>
        <position position="66"/>
    </location>
    <ligand>
        <name>[4Fe-4S] cluster</name>
        <dbReference type="ChEBI" id="CHEBI:49883"/>
        <note>4Fe-4S-S-AdoMet</note>
    </ligand>
</feature>
<name>COFH_METVS</name>